<organism>
    <name type="scientific">Saccharomyces cerevisiae (strain ATCC 204508 / S288c)</name>
    <name type="common">Baker's yeast</name>
    <dbReference type="NCBI Taxonomy" id="559292"/>
    <lineage>
        <taxon>Eukaryota</taxon>
        <taxon>Fungi</taxon>
        <taxon>Dikarya</taxon>
        <taxon>Ascomycota</taxon>
        <taxon>Saccharomycotina</taxon>
        <taxon>Saccharomycetes</taxon>
        <taxon>Saccharomycetales</taxon>
        <taxon>Saccharomycetaceae</taxon>
        <taxon>Saccharomyces</taxon>
    </lineage>
</organism>
<reference key="1">
    <citation type="journal article" date="1994" name="EMBO J.">
        <title>A novel human protein serine/threonine phosphatase, which possesses four tetratricopeptide repeat motifs and localizes to the nucleus.</title>
        <authorList>
            <person name="Chen M.X."/>
            <person name="McPartlin A.E."/>
            <person name="Brown L."/>
            <person name="Chen Y.H."/>
            <person name="Barker H.M."/>
            <person name="Cohen P.T.W."/>
        </authorList>
    </citation>
    <scope>NUCLEOTIDE SEQUENCE [GENOMIC DNA]</scope>
    <source>
        <strain>ATCC 204508 / S288c</strain>
    </source>
</reference>
<reference key="2">
    <citation type="journal article" date="1997" name="Yeast">
        <title>An 18.3 kb DNA fragment from yeast chromosome VII carries four unknown open reading frames, the gene for an Asn synthase, remnants of Ty and three tRNA genes.</title>
        <authorList>
            <person name="van Dyck L."/>
            <person name="Tettelin H."/>
            <person name="Purnelle B."/>
            <person name="Goffeau A."/>
        </authorList>
    </citation>
    <scope>NUCLEOTIDE SEQUENCE [GENOMIC DNA]</scope>
    <source>
        <strain>ATCC 96604 / S288c / FY1679</strain>
    </source>
</reference>
<reference key="3">
    <citation type="journal article" date="1997" name="Nature">
        <title>The nucleotide sequence of Saccharomyces cerevisiae chromosome VII.</title>
        <authorList>
            <person name="Tettelin H."/>
            <person name="Agostoni-Carbone M.L."/>
            <person name="Albermann K."/>
            <person name="Albers M."/>
            <person name="Arroyo J."/>
            <person name="Backes U."/>
            <person name="Barreiros T."/>
            <person name="Bertani I."/>
            <person name="Bjourson A.J."/>
            <person name="Brueckner M."/>
            <person name="Bruschi C.V."/>
            <person name="Carignani G."/>
            <person name="Castagnoli L."/>
            <person name="Cerdan E."/>
            <person name="Clemente M.L."/>
            <person name="Coblenz A."/>
            <person name="Coglievina M."/>
            <person name="Coissac E."/>
            <person name="Defoor E."/>
            <person name="Del Bino S."/>
            <person name="Delius H."/>
            <person name="Delneri D."/>
            <person name="de Wergifosse P."/>
            <person name="Dujon B."/>
            <person name="Durand P."/>
            <person name="Entian K.-D."/>
            <person name="Eraso P."/>
            <person name="Escribano V."/>
            <person name="Fabiani L."/>
            <person name="Fartmann B."/>
            <person name="Feroli F."/>
            <person name="Feuermann M."/>
            <person name="Frontali L."/>
            <person name="Garcia-Gonzalez M."/>
            <person name="Garcia-Saez M.I."/>
            <person name="Goffeau A."/>
            <person name="Guerreiro P."/>
            <person name="Hani J."/>
            <person name="Hansen M."/>
            <person name="Hebling U."/>
            <person name="Hernandez K."/>
            <person name="Heumann K."/>
            <person name="Hilger F."/>
            <person name="Hofmann B."/>
            <person name="Indge K.J."/>
            <person name="James C.M."/>
            <person name="Klima R."/>
            <person name="Koetter P."/>
            <person name="Kramer B."/>
            <person name="Kramer W."/>
            <person name="Lauquin G."/>
            <person name="Leuther H."/>
            <person name="Louis E.J."/>
            <person name="Maillier E."/>
            <person name="Marconi A."/>
            <person name="Martegani E."/>
            <person name="Mazon M.J."/>
            <person name="Mazzoni C."/>
            <person name="McReynolds A.D.K."/>
            <person name="Melchioretto P."/>
            <person name="Mewes H.-W."/>
            <person name="Minenkova O."/>
            <person name="Mueller-Auer S."/>
            <person name="Nawrocki A."/>
            <person name="Netter P."/>
            <person name="Neu R."/>
            <person name="Nombela C."/>
            <person name="Oliver S.G."/>
            <person name="Panzeri L."/>
            <person name="Paoluzi S."/>
            <person name="Plevani P."/>
            <person name="Portetelle D."/>
            <person name="Portillo F."/>
            <person name="Potier S."/>
            <person name="Purnelle B."/>
            <person name="Rieger M."/>
            <person name="Riles L."/>
            <person name="Rinaldi T."/>
            <person name="Robben J."/>
            <person name="Rodrigues-Pousada C."/>
            <person name="Rodriguez-Belmonte E."/>
            <person name="Rodriguez-Torres A.M."/>
            <person name="Rose M."/>
            <person name="Ruzzi M."/>
            <person name="Saliola M."/>
            <person name="Sanchez-Perez M."/>
            <person name="Schaefer B."/>
            <person name="Schaefer M."/>
            <person name="Scharfe M."/>
            <person name="Schmidheini T."/>
            <person name="Schreer A."/>
            <person name="Skala J."/>
            <person name="Souciet J.-L."/>
            <person name="Steensma H.Y."/>
            <person name="Talla E."/>
            <person name="Thierry A."/>
            <person name="Vandenbol M."/>
            <person name="van der Aart Q.J.M."/>
            <person name="Van Dyck L."/>
            <person name="Vanoni M."/>
            <person name="Verhasselt P."/>
            <person name="Voet M."/>
            <person name="Volckaert G."/>
            <person name="Wambutt R."/>
            <person name="Watson M.D."/>
            <person name="Weber N."/>
            <person name="Wedler E."/>
            <person name="Wedler H."/>
            <person name="Wipfli P."/>
            <person name="Wolf K."/>
            <person name="Wright L.F."/>
            <person name="Zaccaria P."/>
            <person name="Zimmermann M."/>
            <person name="Zollner A."/>
            <person name="Kleine K."/>
        </authorList>
    </citation>
    <scope>NUCLEOTIDE SEQUENCE [LARGE SCALE GENOMIC DNA]</scope>
    <source>
        <strain>ATCC 204508 / S288c</strain>
    </source>
</reference>
<reference key="4">
    <citation type="journal article" date="2014" name="G3 (Bethesda)">
        <title>The reference genome sequence of Saccharomyces cerevisiae: Then and now.</title>
        <authorList>
            <person name="Engel S.R."/>
            <person name="Dietrich F.S."/>
            <person name="Fisk D.G."/>
            <person name="Binkley G."/>
            <person name="Balakrishnan R."/>
            <person name="Costanzo M.C."/>
            <person name="Dwight S.S."/>
            <person name="Hitz B.C."/>
            <person name="Karra K."/>
            <person name="Nash R.S."/>
            <person name="Weng S."/>
            <person name="Wong E.D."/>
            <person name="Lloyd P."/>
            <person name="Skrzypek M.S."/>
            <person name="Miyasato S.R."/>
            <person name="Simison M."/>
            <person name="Cherry J.M."/>
        </authorList>
    </citation>
    <scope>GENOME REANNOTATION</scope>
    <source>
        <strain>ATCC 204508 / S288c</strain>
    </source>
</reference>
<reference key="5">
    <citation type="journal article" date="2007" name="Genome Res.">
        <title>Approaching a complete repository of sequence-verified protein-encoding clones for Saccharomyces cerevisiae.</title>
        <authorList>
            <person name="Hu Y."/>
            <person name="Rolfs A."/>
            <person name="Bhullar B."/>
            <person name="Murthy T.V.S."/>
            <person name="Zhu C."/>
            <person name="Berger M.F."/>
            <person name="Camargo A.A."/>
            <person name="Kelley F."/>
            <person name="McCarron S."/>
            <person name="Jepson D."/>
            <person name="Richardson A."/>
            <person name="Raphael J."/>
            <person name="Moreira D."/>
            <person name="Taycher E."/>
            <person name="Zuo D."/>
            <person name="Mohr S."/>
            <person name="Kane M.F."/>
            <person name="Williamson J."/>
            <person name="Simpson A.J.G."/>
            <person name="Bulyk M.L."/>
            <person name="Harlow E."/>
            <person name="Marsischky G."/>
            <person name="Kolodner R.D."/>
            <person name="LaBaer J."/>
        </authorList>
    </citation>
    <scope>NUCLEOTIDE SEQUENCE [GENOMIC DNA]</scope>
    <source>
        <strain>ATCC 204508 / S288c</strain>
    </source>
</reference>
<reference key="6">
    <citation type="journal article" date="1992" name="FEBS Lett.">
        <title>Polymerase chain reactions using Saccharomyces, Drosophila and human DNA predict a large family of protein serine/threonine phosphatases.</title>
        <authorList>
            <person name="Chen M.X."/>
            <person name="Chen Y.H."/>
            <person name="Cohen P.T.W."/>
        </authorList>
    </citation>
    <scope>NUCLEOTIDE SEQUENCE [GENOMIC DNA] OF 253-277</scope>
</reference>
<reference key="7">
    <citation type="journal article" date="2003" name="BMC Cell Biol.">
        <title>Characterization of Saccharomyces cerevisiae protein Ser/Thr phosphatase T1 and comparison to its mammalian homolog PP5.</title>
        <authorList>
            <person name="Jeong J.-Y."/>
            <person name="Johns J."/>
            <person name="Sinclair C."/>
            <person name="Park J.-M."/>
            <person name="Rossie S."/>
        </authorList>
    </citation>
    <scope>CHARACTERIZATION</scope>
    <scope>ACTIVITY REGULATION</scope>
    <scope>SUBCELLULAR LOCATION</scope>
    <scope>INDUCTION</scope>
</reference>
<reference key="8">
    <citation type="journal article" date="2003" name="Nature">
        <title>Global analysis of protein localization in budding yeast.</title>
        <authorList>
            <person name="Huh W.-K."/>
            <person name="Falvo J.V."/>
            <person name="Gerke L.C."/>
            <person name="Carroll A.S."/>
            <person name="Howson R.W."/>
            <person name="Weissman J.S."/>
            <person name="O'Shea E.K."/>
        </authorList>
    </citation>
    <scope>SUBCELLULAR LOCATION [LARGE SCALE ANALYSIS]</scope>
</reference>
<reference key="9">
    <citation type="journal article" date="2003" name="Nature">
        <title>Global analysis of protein expression in yeast.</title>
        <authorList>
            <person name="Ghaemmaghami S."/>
            <person name="Huh W.-K."/>
            <person name="Bower K."/>
            <person name="Howson R.W."/>
            <person name="Belle A."/>
            <person name="Dephoure N."/>
            <person name="O'Shea E.K."/>
            <person name="Weissman J.S."/>
        </authorList>
    </citation>
    <scope>LEVEL OF PROTEIN EXPRESSION [LARGE SCALE ANALYSIS]</scope>
</reference>
<reference key="10">
    <citation type="journal article" date="2006" name="EMBO J.">
        <title>The phosphatase Ppt1 is a dedicated regulator of the molecular chaperone Hsp90.</title>
        <authorList>
            <person name="Wandinger S.K."/>
            <person name="Suhre M.H."/>
            <person name="Wegele H."/>
            <person name="Buchner J."/>
        </authorList>
    </citation>
    <scope>FUNCTION</scope>
    <scope>CATALYTIC ACTIVITY</scope>
    <scope>INTERACTION WITH HSP82</scope>
    <scope>MUTAGENESIS OF HIS-311</scope>
</reference>
<reference key="11">
    <citation type="journal article" date="2006" name="Int. J. Biol. Macromol.">
        <title>Expression, purification and refolding of the phosphatase domain of protein phosphatase 1 (Ppt1) from Saccharomyces cerevisiae.</title>
        <authorList>
            <person name="Suhre M.H."/>
            <person name="Wegele H."/>
            <person name="Wandinger S.K."/>
        </authorList>
    </citation>
    <scope>CATALYTIC ACTIVITY</scope>
    <scope>BIOPHYSICOCHEMICAL PROPERTIES</scope>
</reference>
<reference key="12">
    <citation type="submission" date="2011-07" db="PDB data bank">
        <title>Structure of protein serine/threonine phosphatase from Saccharomyces cerevisiae with similarity to human phosphatase PP5.</title>
        <authorList>
            <consortium name="Midwest center for structural genomics (MCSG)"/>
        </authorList>
    </citation>
    <scope>X-RAY CRYSTALLOGRAPHY (2.3 ANGSTROMS) OF 179-513</scope>
</reference>
<proteinExistence type="evidence at protein level"/>
<comment type="function">
    <text evidence="5">Protein phosphatase that specifically binds to and dephosphorylates the molecular chaperone Hsp90 (HSC82 and HSP82). Dephosphorylation positively regulates the Hsp90 chaperone machinery.</text>
</comment>
<comment type="catalytic activity">
    <reaction evidence="8 9">
        <text>O-phospho-L-seryl-[protein] + H2O = L-seryl-[protein] + phosphate</text>
        <dbReference type="Rhea" id="RHEA:20629"/>
        <dbReference type="Rhea" id="RHEA-COMP:9863"/>
        <dbReference type="Rhea" id="RHEA-COMP:11604"/>
        <dbReference type="ChEBI" id="CHEBI:15377"/>
        <dbReference type="ChEBI" id="CHEBI:29999"/>
        <dbReference type="ChEBI" id="CHEBI:43474"/>
        <dbReference type="ChEBI" id="CHEBI:83421"/>
        <dbReference type="EC" id="3.1.3.16"/>
    </reaction>
    <physiologicalReaction direction="left-to-right" evidence="8 9">
        <dbReference type="Rhea" id="RHEA:20630"/>
    </physiologicalReaction>
</comment>
<comment type="catalytic activity">
    <reaction evidence="8 9">
        <text>O-phospho-L-threonyl-[protein] + H2O = L-threonyl-[protein] + phosphate</text>
        <dbReference type="Rhea" id="RHEA:47004"/>
        <dbReference type="Rhea" id="RHEA-COMP:11060"/>
        <dbReference type="Rhea" id="RHEA-COMP:11605"/>
        <dbReference type="ChEBI" id="CHEBI:15377"/>
        <dbReference type="ChEBI" id="CHEBI:30013"/>
        <dbReference type="ChEBI" id="CHEBI:43474"/>
        <dbReference type="ChEBI" id="CHEBI:61977"/>
        <dbReference type="EC" id="3.1.3.16"/>
    </reaction>
    <physiologicalReaction direction="left-to-right" evidence="8 9">
        <dbReference type="Rhea" id="RHEA:47005"/>
    </physiologicalReaction>
</comment>
<comment type="cofactor">
    <cofactor evidence="1">
        <name>Mg(2+)</name>
        <dbReference type="ChEBI" id="CHEBI:18420"/>
    </cofactor>
    <cofactor evidence="1">
        <name>Mn(2+)</name>
        <dbReference type="ChEBI" id="CHEBI:29035"/>
    </cofactor>
    <text evidence="1">Binds 2 Mg(2+) or Mn(2+) cations per subunit.</text>
</comment>
<comment type="activity regulation">
    <text evidence="2">Stimulated by arachidonic acid and other unsaturated fatty acids, and by arachidoyl coenzyme A.</text>
</comment>
<comment type="biophysicochemical properties">
    <kinetics>
        <KM evidence="6">34 mM for p-nitrophenylphosphate</KM>
    </kinetics>
    <phDependence>
        <text evidence="6">Optimum pH is 7.8.</text>
    </phDependence>
</comment>
<comment type="subunit">
    <text evidence="5">Interacts (via TPR repeats) with HSP82 (via C-terminal MEEVD pentapeptide).</text>
</comment>
<comment type="interaction">
    <interactant intactId="EBI-13796">
        <id>P53043</id>
    </interactant>
    <interactant intactId="EBI-8666">
        <id>P15108</id>
        <label>HSC82</label>
    </interactant>
    <organismsDiffer>false</organismsDiffer>
    <experiments>3</experiments>
</comment>
<comment type="interaction">
    <interactant intactId="EBI-13796">
        <id>P53043</id>
    </interactant>
    <interactant intactId="EBI-8659">
        <id>P02829</id>
        <label>HSP82</label>
    </interactant>
    <organismsDiffer>false</organismsDiffer>
    <experiments>9</experiments>
</comment>
<comment type="subcellular location">
    <subcellularLocation>
        <location evidence="2 3">Nucleus</location>
    </subcellularLocation>
</comment>
<comment type="induction">
    <text evidence="2">Expression peaks in early log phase and decreases dramatically during the stationary phase (at protein level).</text>
</comment>
<comment type="domain">
    <text evidence="5">The TPR repeats mediate protein-protein interactions with substrate proteins, but also autoinhibit PPT1 phosphatase activity.</text>
</comment>
<comment type="miscellaneous">
    <text evidence="4">Present with 6990 molecules/cell in log phase SD medium.</text>
</comment>
<comment type="similarity">
    <text evidence="7">Belongs to the PPP phosphatase family. PP-5 (PP-T) subfamily.</text>
</comment>
<comment type="sequence caution" evidence="7">
    <conflict type="frameshift">
        <sequence resource="EMBL-CDS" id="CAA61596"/>
    </conflict>
</comment>
<protein>
    <recommendedName>
        <fullName>Serine/threonine-protein phosphatase T</fullName>
        <shortName>PPT</shortName>
        <ecNumber evidence="8 9">3.1.3.16</ecNumber>
    </recommendedName>
</protein>
<dbReference type="EC" id="3.1.3.16" evidence="8 9"/>
<dbReference type="EMBL" id="X89417">
    <property type="protein sequence ID" value="CAA61596.1"/>
    <property type="status" value="ALT_FRAME"/>
    <property type="molecule type" value="Genomic_DNA"/>
</dbReference>
<dbReference type="EMBL" id="X83099">
    <property type="protein sequence ID" value="CAA58158.1"/>
    <property type="molecule type" value="Genomic_DNA"/>
</dbReference>
<dbReference type="EMBL" id="Z72908">
    <property type="protein sequence ID" value="CAA97134.1"/>
    <property type="molecule type" value="Genomic_DNA"/>
</dbReference>
<dbReference type="EMBL" id="AY558095">
    <property type="protein sequence ID" value="AAS56421.1"/>
    <property type="molecule type" value="Genomic_DNA"/>
</dbReference>
<dbReference type="EMBL" id="S39959">
    <property type="protein sequence ID" value="AAB22462.1"/>
    <property type="molecule type" value="Genomic_DNA"/>
</dbReference>
<dbReference type="EMBL" id="BK006941">
    <property type="protein sequence ID" value="DAA08216.1"/>
    <property type="molecule type" value="Genomic_DNA"/>
</dbReference>
<dbReference type="PIR" id="S52571">
    <property type="entry name" value="S52571"/>
</dbReference>
<dbReference type="RefSeq" id="NP_011639.3">
    <property type="nucleotide sequence ID" value="NM_001181252.3"/>
</dbReference>
<dbReference type="PDB" id="3ICF">
    <property type="method" value="X-ray"/>
    <property type="resolution" value="2.30 A"/>
    <property type="chains" value="A/B=179-513"/>
</dbReference>
<dbReference type="PDBsum" id="3ICF"/>
<dbReference type="SMR" id="P53043"/>
<dbReference type="BioGRID" id="33370">
    <property type="interactions" value="105"/>
</dbReference>
<dbReference type="DIP" id="DIP-1525N"/>
<dbReference type="FunCoup" id="P53043">
    <property type="interactions" value="1423"/>
</dbReference>
<dbReference type="IntAct" id="P53043">
    <property type="interactions" value="15"/>
</dbReference>
<dbReference type="MINT" id="P53043"/>
<dbReference type="STRING" id="4932.YGR123C"/>
<dbReference type="iPTMnet" id="P53043"/>
<dbReference type="PaxDb" id="4932-YGR123C"/>
<dbReference type="PeptideAtlas" id="P53043"/>
<dbReference type="EnsemblFungi" id="YGR123C_mRNA">
    <property type="protein sequence ID" value="YGR123C"/>
    <property type="gene ID" value="YGR123C"/>
</dbReference>
<dbReference type="GeneID" id="853023"/>
<dbReference type="KEGG" id="sce:YGR123C"/>
<dbReference type="AGR" id="SGD:S000003355"/>
<dbReference type="SGD" id="S000003355">
    <property type="gene designation" value="PPT1"/>
</dbReference>
<dbReference type="VEuPathDB" id="FungiDB:YGR123C"/>
<dbReference type="eggNOG" id="KOG0376">
    <property type="taxonomic scope" value="Eukaryota"/>
</dbReference>
<dbReference type="GeneTree" id="ENSGT00940000158785"/>
<dbReference type="HOGENOM" id="CLU_004962_5_2_1"/>
<dbReference type="InParanoid" id="P53043"/>
<dbReference type="OMA" id="IHKKYAF"/>
<dbReference type="OrthoDB" id="445564at2759"/>
<dbReference type="BioCyc" id="YEAST:G3O-30830-MONOMER"/>
<dbReference type="Reactome" id="R-SCE-5693565">
    <property type="pathway name" value="Recruitment and ATM-mediated phosphorylation of repair and signaling proteins at DNA double strand breaks"/>
</dbReference>
<dbReference type="BioGRID-ORCS" id="853023">
    <property type="hits" value="0 hits in 10 CRISPR screens"/>
</dbReference>
<dbReference type="EvolutionaryTrace" id="P53043"/>
<dbReference type="PRO" id="PR:P53043"/>
<dbReference type="Proteomes" id="UP000002311">
    <property type="component" value="Chromosome VII"/>
</dbReference>
<dbReference type="RNAct" id="P53043">
    <property type="molecule type" value="protein"/>
</dbReference>
<dbReference type="GO" id="GO:0005737">
    <property type="term" value="C:cytoplasm"/>
    <property type="evidence" value="ECO:0000314"/>
    <property type="project" value="SGD"/>
</dbReference>
<dbReference type="GO" id="GO:0005829">
    <property type="term" value="C:cytosol"/>
    <property type="evidence" value="ECO:0000318"/>
    <property type="project" value="GO_Central"/>
</dbReference>
<dbReference type="GO" id="GO:0005634">
    <property type="term" value="C:nucleus"/>
    <property type="evidence" value="ECO:0000314"/>
    <property type="project" value="SGD"/>
</dbReference>
<dbReference type="GO" id="GO:0046872">
    <property type="term" value="F:metal ion binding"/>
    <property type="evidence" value="ECO:0007669"/>
    <property type="project" value="UniProtKB-KW"/>
</dbReference>
<dbReference type="GO" id="GO:0004722">
    <property type="term" value="F:protein serine/threonine phosphatase activity"/>
    <property type="evidence" value="ECO:0000314"/>
    <property type="project" value="SGD"/>
</dbReference>
<dbReference type="CDD" id="cd07417">
    <property type="entry name" value="MPP_PP5_C"/>
    <property type="match status" value="1"/>
</dbReference>
<dbReference type="FunFam" id="3.60.21.10:FF:000036">
    <property type="entry name" value="Serine/threonine protein phosphatase 5"/>
    <property type="match status" value="1"/>
</dbReference>
<dbReference type="FunFam" id="1.25.40.10:FF:000839">
    <property type="entry name" value="Serine/threonine-protein phosphatase"/>
    <property type="match status" value="1"/>
</dbReference>
<dbReference type="Gene3D" id="3.60.21.10">
    <property type="match status" value="1"/>
</dbReference>
<dbReference type="Gene3D" id="1.25.40.10">
    <property type="entry name" value="Tetratricopeptide repeat domain"/>
    <property type="match status" value="1"/>
</dbReference>
<dbReference type="InterPro" id="IPR004843">
    <property type="entry name" value="Calcineurin-like_PHP_ApaH"/>
</dbReference>
<dbReference type="InterPro" id="IPR029052">
    <property type="entry name" value="Metallo-depent_PP-like"/>
</dbReference>
<dbReference type="InterPro" id="IPR041753">
    <property type="entry name" value="PP5_C"/>
</dbReference>
<dbReference type="InterPro" id="IPR013235">
    <property type="entry name" value="PPP_dom"/>
</dbReference>
<dbReference type="InterPro" id="IPR051134">
    <property type="entry name" value="PPP_phosphatase"/>
</dbReference>
<dbReference type="InterPro" id="IPR006186">
    <property type="entry name" value="Ser/Thr-sp_prot-phosphatase"/>
</dbReference>
<dbReference type="InterPro" id="IPR011990">
    <property type="entry name" value="TPR-like_helical_dom_sf"/>
</dbReference>
<dbReference type="InterPro" id="IPR019734">
    <property type="entry name" value="TPR_rpt"/>
</dbReference>
<dbReference type="PANTHER" id="PTHR45668">
    <property type="entry name" value="SERINE/THREONINE-PROTEIN PHOSPHATASE 5-RELATED"/>
    <property type="match status" value="1"/>
</dbReference>
<dbReference type="PANTHER" id="PTHR45668:SF5">
    <property type="entry name" value="SERINE_THREONINE-PROTEIN PHOSPHATASE 5"/>
    <property type="match status" value="1"/>
</dbReference>
<dbReference type="Pfam" id="PF00149">
    <property type="entry name" value="Metallophos"/>
    <property type="match status" value="1"/>
</dbReference>
<dbReference type="Pfam" id="PF08321">
    <property type="entry name" value="PPP5"/>
    <property type="match status" value="1"/>
</dbReference>
<dbReference type="PIRSF" id="PIRSF033096">
    <property type="entry name" value="PPPtase_5"/>
    <property type="match status" value="1"/>
</dbReference>
<dbReference type="PRINTS" id="PR00114">
    <property type="entry name" value="STPHPHTASE"/>
</dbReference>
<dbReference type="SMART" id="SM00156">
    <property type="entry name" value="PP2Ac"/>
    <property type="match status" value="1"/>
</dbReference>
<dbReference type="SMART" id="SM00028">
    <property type="entry name" value="TPR"/>
    <property type="match status" value="3"/>
</dbReference>
<dbReference type="SUPFAM" id="SSF56300">
    <property type="entry name" value="Metallo-dependent phosphatases"/>
    <property type="match status" value="1"/>
</dbReference>
<dbReference type="SUPFAM" id="SSF48452">
    <property type="entry name" value="TPR-like"/>
    <property type="match status" value="1"/>
</dbReference>
<dbReference type="PROSITE" id="PS00125">
    <property type="entry name" value="SER_THR_PHOSPHATASE"/>
    <property type="match status" value="1"/>
</dbReference>
<dbReference type="PROSITE" id="PS50005">
    <property type="entry name" value="TPR"/>
    <property type="match status" value="3"/>
</dbReference>
<dbReference type="PROSITE" id="PS50293">
    <property type="entry name" value="TPR_REGION"/>
    <property type="match status" value="1"/>
</dbReference>
<feature type="chain" id="PRO_0000058898" description="Serine/threonine-protein phosphatase T">
    <location>
        <begin position="1"/>
        <end position="513"/>
    </location>
</feature>
<feature type="repeat" description="TPR 1">
    <location>
        <begin position="12"/>
        <end position="45"/>
    </location>
</feature>
<feature type="repeat" description="TPR 2">
    <location>
        <begin position="46"/>
        <end position="79"/>
    </location>
</feature>
<feature type="repeat" description="TPR 3">
    <location>
        <begin position="80"/>
        <end position="113"/>
    </location>
</feature>
<feature type="region of interest" description="Catalytic">
    <location>
        <begin position="188"/>
        <end position="513"/>
    </location>
</feature>
<feature type="active site" description="Proton donor/acceptor" evidence="1">
    <location>
        <position position="311"/>
    </location>
</feature>
<feature type="binding site" evidence="1">
    <location>
        <position position="249"/>
    </location>
    <ligand>
        <name>Mn(2+)</name>
        <dbReference type="ChEBI" id="CHEBI:29035"/>
        <label>1</label>
    </ligand>
</feature>
<feature type="binding site" evidence="1">
    <location>
        <position position="251"/>
    </location>
    <ligand>
        <name>Mn(2+)</name>
        <dbReference type="ChEBI" id="CHEBI:29035"/>
        <label>1</label>
    </ligand>
</feature>
<feature type="binding site" evidence="1">
    <location>
        <position position="278"/>
    </location>
    <ligand>
        <name>Mn(2+)</name>
        <dbReference type="ChEBI" id="CHEBI:29035"/>
        <label>1</label>
    </ligand>
</feature>
<feature type="binding site" evidence="1">
    <location>
        <position position="278"/>
    </location>
    <ligand>
        <name>Mn(2+)</name>
        <dbReference type="ChEBI" id="CHEBI:29035"/>
        <label>2</label>
    </ligand>
</feature>
<feature type="binding site" evidence="1">
    <location>
        <position position="310"/>
    </location>
    <ligand>
        <name>Mn(2+)</name>
        <dbReference type="ChEBI" id="CHEBI:29035"/>
        <label>2</label>
    </ligand>
</feature>
<feature type="binding site" evidence="1">
    <location>
        <position position="359"/>
    </location>
    <ligand>
        <name>Mn(2+)</name>
        <dbReference type="ChEBI" id="CHEBI:29035"/>
        <label>2</label>
    </ligand>
</feature>
<feature type="binding site" evidence="1">
    <location>
        <position position="434"/>
    </location>
    <ligand>
        <name>Mn(2+)</name>
        <dbReference type="ChEBI" id="CHEBI:29035"/>
        <label>2</label>
    </ligand>
</feature>
<feature type="mutagenesis site" description="Loss of phosphatase activity." evidence="5">
    <original>H</original>
    <variation>A</variation>
    <location>
        <position position="311"/>
    </location>
</feature>
<feature type="helix" evidence="10">
    <location>
        <begin position="192"/>
        <end position="201"/>
    </location>
</feature>
<feature type="helix" evidence="10">
    <location>
        <begin position="203"/>
        <end position="205"/>
    </location>
</feature>
<feature type="helix" evidence="10">
    <location>
        <begin position="211"/>
        <end position="226"/>
    </location>
</feature>
<feature type="strand" evidence="10">
    <location>
        <begin position="230"/>
        <end position="234"/>
    </location>
</feature>
<feature type="strand" evidence="10">
    <location>
        <begin position="237"/>
        <end position="239"/>
    </location>
</feature>
<feature type="strand" evidence="10">
    <location>
        <begin position="243"/>
        <end position="247"/>
    </location>
</feature>
<feature type="helix" evidence="10">
    <location>
        <begin position="254"/>
        <end position="264"/>
    </location>
</feature>
<feature type="strand" evidence="10">
    <location>
        <begin position="271"/>
        <end position="275"/>
    </location>
</feature>
<feature type="strand" evidence="10">
    <location>
        <begin position="280"/>
        <end position="283"/>
    </location>
</feature>
<feature type="helix" evidence="10">
    <location>
        <begin position="286"/>
        <end position="299"/>
    </location>
</feature>
<feature type="turn" evidence="10">
    <location>
        <begin position="301"/>
        <end position="303"/>
    </location>
</feature>
<feature type="strand" evidence="10">
    <location>
        <begin position="304"/>
        <end position="306"/>
    </location>
</feature>
<feature type="helix" evidence="10">
    <location>
        <begin position="314"/>
        <end position="320"/>
    </location>
</feature>
<feature type="helix" evidence="10">
    <location>
        <begin position="322"/>
        <end position="329"/>
    </location>
</feature>
<feature type="helix" evidence="10">
    <location>
        <begin position="332"/>
        <end position="342"/>
    </location>
</feature>
<feature type="strand" evidence="10">
    <location>
        <begin position="347"/>
        <end position="351"/>
    </location>
</feature>
<feature type="turn" evidence="10">
    <location>
        <begin position="352"/>
        <end position="354"/>
    </location>
</feature>
<feature type="strand" evidence="10">
    <location>
        <begin position="355"/>
        <end position="357"/>
    </location>
</feature>
<feature type="helix" evidence="10">
    <location>
        <begin position="370"/>
        <end position="374"/>
    </location>
</feature>
<feature type="strand" evidence="10">
    <location>
        <begin position="384"/>
        <end position="386"/>
    </location>
</feature>
<feature type="helix" evidence="10">
    <location>
        <begin position="387"/>
        <end position="393"/>
    </location>
</feature>
<feature type="strand" evidence="10">
    <location>
        <begin position="398"/>
        <end position="404"/>
    </location>
</feature>
<feature type="strand" evidence="10">
    <location>
        <begin position="411"/>
        <end position="413"/>
    </location>
</feature>
<feature type="helix" evidence="10">
    <location>
        <begin position="415"/>
        <end position="424"/>
    </location>
</feature>
<feature type="strand" evidence="10">
    <location>
        <begin position="428"/>
        <end position="432"/>
    </location>
</feature>
<feature type="strand" evidence="10">
    <location>
        <begin position="439"/>
        <end position="444"/>
    </location>
</feature>
<feature type="helix" evidence="10">
    <location>
        <begin position="445"/>
        <end position="447"/>
    </location>
</feature>
<feature type="strand" evidence="10">
    <location>
        <begin position="449"/>
        <end position="452"/>
    </location>
</feature>
<feature type="helix" evidence="10">
    <location>
        <begin position="458"/>
        <end position="460"/>
    </location>
</feature>
<feature type="strand" evidence="10">
    <location>
        <begin position="465"/>
        <end position="471"/>
    </location>
</feature>
<feature type="turn" evidence="10">
    <location>
        <begin position="480"/>
        <end position="482"/>
    </location>
</feature>
<feature type="strand" evidence="10">
    <location>
        <begin position="488"/>
        <end position="493"/>
    </location>
</feature>
<feature type="turn" evidence="10">
    <location>
        <begin position="503"/>
        <end position="506"/>
    </location>
</feature>
<accession>P53043</accession>
<accession>D6VUQ5</accession>
<name>PPP5_YEAST</name>
<evidence type="ECO:0000250" key="1">
    <source>
        <dbReference type="UniProtKB" id="P53041"/>
    </source>
</evidence>
<evidence type="ECO:0000269" key="2">
    <source>
    </source>
</evidence>
<evidence type="ECO:0000269" key="3">
    <source>
    </source>
</evidence>
<evidence type="ECO:0000269" key="4">
    <source>
    </source>
</evidence>
<evidence type="ECO:0000269" key="5">
    <source>
    </source>
</evidence>
<evidence type="ECO:0000269" key="6">
    <source>
    </source>
</evidence>
<evidence type="ECO:0000305" key="7"/>
<evidence type="ECO:0000305" key="8">
    <source>
    </source>
</evidence>
<evidence type="ECO:0000305" key="9">
    <source>
    </source>
</evidence>
<evidence type="ECO:0007829" key="10">
    <source>
        <dbReference type="PDB" id="3ICF"/>
    </source>
</evidence>
<gene>
    <name type="primary">PPT1</name>
    <name type="ordered locus">YGR123C</name>
    <name type="ORF">G6347</name>
</gene>
<sequence>MSTPTAADRAKALERKNEGNVFVKEKHFLKAIEKYTEAIDLDSTQSIYFSNRAFAHFKVDNFQSALNDCDEAIKLDPKNIKAYHRRALSCMALLEFKKARKDLNVLLKAKPNDPAATKALLTCDRFIREERFRKAIGGAENEAKISLCQTLNLSSFDANADLANYEGPKLEFEQLYDDKNAFKGAKIKNMSQEFISKMVNDLFLKGKYLPKKYVAAIISHADTLFRQEPSMVELENNSTPDVKISVCGDTHGQFYDVLNLFRKFGKVGPKHTYLFNGDFVDRGSWSCEVALLFYCLKILHPNNFFLNRGNHESDNMNKIYGFEDECKYKYSQRIFNMFAQSFESLPLATLINNDYLVMHGGLPSDPSATLSDFKNIDRFAQPPRDGAFMELLWADPQEANGMGPSQRGLGHAFGPDITDRFLRNNKLRKIFRSHELRMGGVQFEQKGKLMTVFSAPNYCDSQGNLGGVIHVVPGHGILQAGRNDDQNLIIETFEAVEHPDIKPMAYSNGGFGL</sequence>
<keyword id="KW-0002">3D-structure</keyword>
<keyword id="KW-0378">Hydrolase</keyword>
<keyword id="KW-0464">Manganese</keyword>
<keyword id="KW-0479">Metal-binding</keyword>
<keyword id="KW-0539">Nucleus</keyword>
<keyword id="KW-0904">Protein phosphatase</keyword>
<keyword id="KW-1185">Reference proteome</keyword>
<keyword id="KW-0677">Repeat</keyword>
<keyword id="KW-0802">TPR repeat</keyword>